<organism>
    <name type="scientific">Eublaberus distanti</name>
    <name type="common">Four-spotted cockroach</name>
    <dbReference type="NCBI Taxonomy" id="424761"/>
    <lineage>
        <taxon>Eukaryota</taxon>
        <taxon>Metazoa</taxon>
        <taxon>Ecdysozoa</taxon>
        <taxon>Arthropoda</taxon>
        <taxon>Hexapoda</taxon>
        <taxon>Insecta</taxon>
        <taxon>Pterygota</taxon>
        <taxon>Neoptera</taxon>
        <taxon>Polyneoptera</taxon>
        <taxon>Dictyoptera</taxon>
        <taxon>Blattodea</taxon>
        <taxon>Blaberoidea</taxon>
        <taxon>Blaberidae</taxon>
        <taxon>Blaberinae</taxon>
        <taxon>Eublaberus</taxon>
    </lineage>
</organism>
<reference evidence="5" key="1">
    <citation type="journal article" date="2009" name="BMC Evol. Biol.">
        <title>A proteomic approach for studying insect phylogeny: CAPA peptides of ancient insect taxa (Dictyoptera, Blattoptera) as a test case.</title>
        <authorList>
            <person name="Roth S."/>
            <person name="Fromm B."/>
            <person name="Gaede G."/>
            <person name="Predel R."/>
        </authorList>
    </citation>
    <scope>PROTEIN SEQUENCE</scope>
    <scope>AMIDATION AT LEU-17</scope>
    <source>
        <tissue evidence="3">Abdominal perisympathetic organs</tissue>
    </source>
</reference>
<feature type="peptide" id="PRO_0000378691" description="Pyrokinin-5" evidence="3">
    <location>
        <begin position="1"/>
        <end position="17"/>
    </location>
</feature>
<feature type="modified residue" description="Leucine amide" evidence="3">
    <location>
        <position position="17"/>
    </location>
</feature>
<evidence type="ECO:0000250" key="1">
    <source>
        <dbReference type="UniProtKB" id="P82617"/>
    </source>
</evidence>
<evidence type="ECO:0000255" key="2"/>
<evidence type="ECO:0000269" key="3">
    <source>
    </source>
</evidence>
<evidence type="ECO:0000303" key="4">
    <source>
    </source>
</evidence>
<evidence type="ECO:0000305" key="5"/>
<keyword id="KW-0027">Amidation</keyword>
<keyword id="KW-0903">Direct protein sequencing</keyword>
<keyword id="KW-0527">Neuropeptide</keyword>
<keyword id="KW-0964">Secreted</keyword>
<accession>P85617</accession>
<comment type="function">
    <text evidence="1">Myoactive.</text>
</comment>
<comment type="subcellular location">
    <subcellularLocation>
        <location evidence="5">Secreted</location>
    </subcellularLocation>
</comment>
<comment type="similarity">
    <text evidence="2">Belongs to the pyrokinin family.</text>
</comment>
<proteinExistence type="evidence at protein level"/>
<protein>
    <recommendedName>
        <fullName evidence="1">Pyrokinin-5</fullName>
    </recommendedName>
    <alternativeName>
        <fullName evidence="4">EubDi-Capa-PK</fullName>
    </alternativeName>
    <alternativeName>
        <fullName evidence="1">FXPRL-amide</fullName>
    </alternativeName>
</protein>
<name>PPK5_EUBDI</name>
<sequence length="17" mass="1837">AGESSNEAKGMWFGPRL</sequence>
<dbReference type="GO" id="GO:0005576">
    <property type="term" value="C:extracellular region"/>
    <property type="evidence" value="ECO:0007669"/>
    <property type="project" value="UniProtKB-SubCell"/>
</dbReference>
<dbReference type="GO" id="GO:0005184">
    <property type="term" value="F:neuropeptide hormone activity"/>
    <property type="evidence" value="ECO:0007669"/>
    <property type="project" value="InterPro"/>
</dbReference>
<dbReference type="GO" id="GO:0007218">
    <property type="term" value="P:neuropeptide signaling pathway"/>
    <property type="evidence" value="ECO:0007669"/>
    <property type="project" value="UniProtKB-KW"/>
</dbReference>
<dbReference type="InterPro" id="IPR001484">
    <property type="entry name" value="Pyrokinin_CS"/>
</dbReference>
<dbReference type="PROSITE" id="PS00539">
    <property type="entry name" value="PYROKININ"/>
    <property type="match status" value="1"/>
</dbReference>